<reference key="1">
    <citation type="journal article" date="2003" name="J. Bacteriol.">
        <title>Comparative genomics of Salmonella enterica serovar Typhi strains Ty2 and CT18.</title>
        <authorList>
            <person name="Deng W."/>
            <person name="Liou S.-R."/>
            <person name="Plunkett G. III"/>
            <person name="Mayhew G.F."/>
            <person name="Rose D.J."/>
            <person name="Burland V."/>
            <person name="Kodoyianni V."/>
            <person name="Schwartz D.C."/>
            <person name="Blattner F.R."/>
        </authorList>
    </citation>
    <scope>NUCLEOTIDE SEQUENCE [LARGE SCALE GENOMIC DNA]</scope>
    <source>
        <strain>ATCC 700931 / Ty2</strain>
    </source>
</reference>
<reference key="2">
    <citation type="journal article" date="2001" name="Nature">
        <title>Complete genome sequence of a multiple drug resistant Salmonella enterica serovar Typhi CT18.</title>
        <authorList>
            <person name="Parkhill J."/>
            <person name="Dougan G."/>
            <person name="James K.D."/>
            <person name="Thomson N.R."/>
            <person name="Pickard D."/>
            <person name="Wain J."/>
            <person name="Churcher C.M."/>
            <person name="Mungall K.L."/>
            <person name="Bentley S.D."/>
            <person name="Holden M.T.G."/>
            <person name="Sebaihia M."/>
            <person name="Baker S."/>
            <person name="Basham D."/>
            <person name="Brooks K."/>
            <person name="Chillingworth T."/>
            <person name="Connerton P."/>
            <person name="Cronin A."/>
            <person name="Davis P."/>
            <person name="Davies R.M."/>
            <person name="Dowd L."/>
            <person name="White N."/>
            <person name="Farrar J."/>
            <person name="Feltwell T."/>
            <person name="Hamlin N."/>
            <person name="Haque A."/>
            <person name="Hien T.T."/>
            <person name="Holroyd S."/>
            <person name="Jagels K."/>
            <person name="Krogh A."/>
            <person name="Larsen T.S."/>
            <person name="Leather S."/>
            <person name="Moule S."/>
            <person name="O'Gaora P."/>
            <person name="Parry C."/>
            <person name="Quail M.A."/>
            <person name="Rutherford K.M."/>
            <person name="Simmonds M."/>
            <person name="Skelton J."/>
            <person name="Stevens K."/>
            <person name="Whitehead S."/>
            <person name="Barrell B.G."/>
        </authorList>
    </citation>
    <scope>NUCLEOTIDE SEQUENCE [LARGE SCALE GENOMIC DNA]</scope>
    <source>
        <strain>CT18</strain>
    </source>
</reference>
<organism>
    <name type="scientific">Salmonella typhi</name>
    <dbReference type="NCBI Taxonomy" id="90370"/>
    <lineage>
        <taxon>Bacteria</taxon>
        <taxon>Pseudomonadati</taxon>
        <taxon>Pseudomonadota</taxon>
        <taxon>Gammaproteobacteria</taxon>
        <taxon>Enterobacterales</taxon>
        <taxon>Enterobacteriaceae</taxon>
        <taxon>Salmonella</taxon>
    </lineage>
</organism>
<accession>Q8XGT6</accession>
<accession>Q7AMU8</accession>
<protein>
    <recommendedName>
        <fullName evidence="1">Endo-type membrane-bound lytic murein transglycosylase A</fullName>
        <ecNumber evidence="1">4.2.2.n2</ecNumber>
    </recommendedName>
    <alternativeName>
        <fullName evidence="1">Peptidoglycan lytic endotransglycosylase</fullName>
    </alternativeName>
</protein>
<keyword id="KW-0998">Cell outer membrane</keyword>
<keyword id="KW-0961">Cell wall biogenesis/degradation</keyword>
<keyword id="KW-0449">Lipoprotein</keyword>
<keyword id="KW-0456">Lyase</keyword>
<keyword id="KW-0472">Membrane</keyword>
<keyword id="KW-0564">Palmitate</keyword>
<keyword id="KW-0732">Signal</keyword>
<proteinExistence type="inferred from homology"/>
<gene>
    <name evidence="1" type="primary">emtA</name>
    <name type="synonym">mltE</name>
    <name type="ordered locus">STY1927</name>
    <name type="ordered locus">t1078</name>
</gene>
<feature type="signal peptide" evidence="1">
    <location>
        <begin position="1"/>
        <end position="15"/>
    </location>
</feature>
<feature type="chain" id="PRO_0000312912" description="Endo-type membrane-bound lytic murein transglycosylase A">
    <location>
        <begin position="16"/>
        <end position="203"/>
    </location>
</feature>
<feature type="lipid moiety-binding region" description="N-palmitoyl cysteine" evidence="1">
    <location>
        <position position="16"/>
    </location>
</feature>
<feature type="lipid moiety-binding region" description="S-diacylglycerol cysteine" evidence="1">
    <location>
        <position position="16"/>
    </location>
</feature>
<sequence>MKLRWFAFLVVILAGCSSKQDYRNPPWNAEVPVKRAMQWMPISEKAGAAWGVDPHLITAIIAIESGGNPNAVSKSNAIGLMQLKASTSGRDVYRRMGWRGEPTTSELKNPERNISMGAAYLSILENGPLAGIKDPQVMQYALVVSYANGAGALLRTFSSDRKKAIEKINDLDADEFFEHVVDNHPAPQAPRYIWKLQQALDAM</sequence>
<name>EMTA_SALTI</name>
<comment type="function">
    <text evidence="1">Murein-degrading enzyme. May play a role in recycling of muropeptides during cell elongation and/or cell division. Preferentially cleaves at a distance of more than two disaccharide units from the ends of the glycan chain.</text>
</comment>
<comment type="catalytic activity">
    <reaction evidence="1">
        <text>Endolytic cleavage of the (1-&gt;4)-beta-glycosidic linkage between N-acetylmuramic acid (MurNAc) and N-acetylglucosamine (GlcNAc) residues in peptidoglycan with concomitant formation of a 1,6-anhydrobond in the MurNAc residue.</text>
        <dbReference type="EC" id="4.2.2.n2"/>
    </reaction>
</comment>
<comment type="subcellular location">
    <subcellularLocation>
        <location evidence="1">Cell outer membrane</location>
        <topology evidence="1">Lipid-anchor</topology>
    </subcellularLocation>
</comment>
<comment type="similarity">
    <text evidence="1">Belongs to the transglycosylase Slt family.</text>
</comment>
<evidence type="ECO:0000255" key="1">
    <source>
        <dbReference type="HAMAP-Rule" id="MF_01381"/>
    </source>
</evidence>
<dbReference type="EC" id="4.2.2.n2" evidence="1"/>
<dbReference type="EMBL" id="AE014613">
    <property type="protein sequence ID" value="AAO68744.1"/>
    <property type="molecule type" value="Genomic_DNA"/>
</dbReference>
<dbReference type="EMBL" id="AL513382">
    <property type="protein sequence ID" value="CAD05482.1"/>
    <property type="molecule type" value="Genomic_DNA"/>
</dbReference>
<dbReference type="RefSeq" id="NP_456306.1">
    <property type="nucleotide sequence ID" value="NC_003198.1"/>
</dbReference>
<dbReference type="RefSeq" id="WP_000776974.1">
    <property type="nucleotide sequence ID" value="NZ_WSUR01000004.1"/>
</dbReference>
<dbReference type="SMR" id="Q8XGT6"/>
<dbReference type="STRING" id="220341.gene:17585847"/>
<dbReference type="CAZy" id="GH23">
    <property type="family name" value="Glycoside Hydrolase Family 23"/>
</dbReference>
<dbReference type="KEGG" id="stt:t1078"/>
<dbReference type="KEGG" id="sty:STY1927"/>
<dbReference type="PATRIC" id="fig|220341.7.peg.1944"/>
<dbReference type="eggNOG" id="COG0741">
    <property type="taxonomic scope" value="Bacteria"/>
</dbReference>
<dbReference type="HOGENOM" id="CLU_103257_0_0_6"/>
<dbReference type="OMA" id="EVYRYMG"/>
<dbReference type="OrthoDB" id="92254at2"/>
<dbReference type="Proteomes" id="UP000000541">
    <property type="component" value="Chromosome"/>
</dbReference>
<dbReference type="Proteomes" id="UP000002670">
    <property type="component" value="Chromosome"/>
</dbReference>
<dbReference type="GO" id="GO:0009279">
    <property type="term" value="C:cell outer membrane"/>
    <property type="evidence" value="ECO:0007669"/>
    <property type="project" value="UniProtKB-SubCell"/>
</dbReference>
<dbReference type="GO" id="GO:0008932">
    <property type="term" value="F:lytic endotransglycosylase activity"/>
    <property type="evidence" value="ECO:0007669"/>
    <property type="project" value="InterPro"/>
</dbReference>
<dbReference type="GO" id="GO:0016998">
    <property type="term" value="P:cell wall macromolecule catabolic process"/>
    <property type="evidence" value="ECO:0007669"/>
    <property type="project" value="UniProtKB-UniRule"/>
</dbReference>
<dbReference type="GO" id="GO:0071555">
    <property type="term" value="P:cell wall organization"/>
    <property type="evidence" value="ECO:0007669"/>
    <property type="project" value="UniProtKB-KW"/>
</dbReference>
<dbReference type="GO" id="GO:0000270">
    <property type="term" value="P:peptidoglycan metabolic process"/>
    <property type="evidence" value="ECO:0007669"/>
    <property type="project" value="InterPro"/>
</dbReference>
<dbReference type="CDD" id="cd16893">
    <property type="entry name" value="LT_MltC_MltE"/>
    <property type="match status" value="1"/>
</dbReference>
<dbReference type="Gene3D" id="1.10.530.10">
    <property type="match status" value="1"/>
</dbReference>
<dbReference type="HAMAP" id="MF_01381">
    <property type="entry name" value="EmtA"/>
    <property type="match status" value="1"/>
</dbReference>
<dbReference type="InterPro" id="IPR023946">
    <property type="entry name" value="EmtA"/>
</dbReference>
<dbReference type="InterPro" id="IPR023346">
    <property type="entry name" value="Lysozyme-like_dom_sf"/>
</dbReference>
<dbReference type="InterPro" id="IPR000189">
    <property type="entry name" value="Transglyc_AS"/>
</dbReference>
<dbReference type="InterPro" id="IPR008258">
    <property type="entry name" value="Transglycosylase_SLT_dom_1"/>
</dbReference>
<dbReference type="NCBIfam" id="NF012014">
    <property type="entry name" value="PRK15470.1"/>
    <property type="match status" value="1"/>
</dbReference>
<dbReference type="PANTHER" id="PTHR37423:SF4">
    <property type="entry name" value="ENDO-TYPE MEMBRANE-BOUND LYTIC MUREIN TRANSGLYCOSYLASE A"/>
    <property type="match status" value="1"/>
</dbReference>
<dbReference type="PANTHER" id="PTHR37423">
    <property type="entry name" value="SOLUBLE LYTIC MUREIN TRANSGLYCOSYLASE-RELATED"/>
    <property type="match status" value="1"/>
</dbReference>
<dbReference type="Pfam" id="PF01464">
    <property type="entry name" value="SLT"/>
    <property type="match status" value="1"/>
</dbReference>
<dbReference type="SUPFAM" id="SSF53955">
    <property type="entry name" value="Lysozyme-like"/>
    <property type="match status" value="1"/>
</dbReference>
<dbReference type="PROSITE" id="PS51257">
    <property type="entry name" value="PROKAR_LIPOPROTEIN"/>
    <property type="match status" value="1"/>
</dbReference>
<dbReference type="PROSITE" id="PS00922">
    <property type="entry name" value="TRANSGLYCOSYLASE"/>
    <property type="match status" value="1"/>
</dbReference>